<comment type="alternative products">
    <event type="alternative splicing"/>
    <isoform>
        <id>F4J2Z7-1</id>
        <name>1</name>
        <sequence type="displayed"/>
    </isoform>
    <isoform>
        <id>F4J2Z7-2</id>
        <name>2</name>
        <sequence type="described" ref="VSP_044207"/>
    </isoform>
</comment>
<comment type="similarity">
    <text evidence="2">Belongs to the short-chain dehydrogenases/reductases (SDR) family.</text>
</comment>
<comment type="sequence caution" evidence="2">
    <conflict type="erroneous initiation">
        <sequence resource="EMBL-CDS" id="AEE77557"/>
    </conflict>
    <text>Truncated N-terminus.</text>
</comment>
<sequence>MPKLLVIFNIIYPLQSLKKDTFNFWWSFQKWKYNKTMSGLRQVLDGKIAIITGGASGIGAEAVRLFTDHGAKVVIVDIQEELGQNLAVSIGLDKASFYRCNVTDETDVENAVKFTVEKHGKLDVLFSNAGVLEAFGSVLDLDLEAFDRTMAVNVRGAAAFIKHAARSMVASGTRGSIVCTTSIAAEIGGPGPHSYTASKHALLGLIRSACAGLGQYGIRVNGVAPYGVATGMTSAYNEEAVKMLEEYGEALGNLKGVVLKARHIAEAALFLASDDSVYISGQNLVVDGGFSVVKLMTT</sequence>
<reference key="1">
    <citation type="journal article" date="2000" name="DNA Res.">
        <title>Structural analysis of Arabidopsis thaliana chromosome 3. I. Sequence features of the regions of 4,504,864 bp covered by sixty P1 and TAC clones.</title>
        <authorList>
            <person name="Sato S."/>
            <person name="Nakamura Y."/>
            <person name="Kaneko T."/>
            <person name="Katoh T."/>
            <person name="Asamizu E."/>
            <person name="Tabata S."/>
        </authorList>
    </citation>
    <scope>NUCLEOTIDE SEQUENCE [LARGE SCALE GENOMIC DNA]</scope>
    <source>
        <strain>cv. Columbia</strain>
    </source>
</reference>
<reference key="2">
    <citation type="journal article" date="2017" name="Plant J.">
        <title>Araport11: a complete reannotation of the Arabidopsis thaliana reference genome.</title>
        <authorList>
            <person name="Cheng C.Y."/>
            <person name="Krishnakumar V."/>
            <person name="Chan A.P."/>
            <person name="Thibaud-Nissen F."/>
            <person name="Schobel S."/>
            <person name="Town C.D."/>
        </authorList>
    </citation>
    <scope>GENOME REANNOTATION</scope>
    <source>
        <strain>cv. Columbia</strain>
    </source>
</reference>
<reference key="3">
    <citation type="submission" date="2006-07" db="EMBL/GenBank/DDBJ databases">
        <title>Large-scale analysis of RIKEN Arabidopsis full-length (RAFL) cDNAs.</title>
        <authorList>
            <person name="Totoki Y."/>
            <person name="Seki M."/>
            <person name="Ishida J."/>
            <person name="Nakajima M."/>
            <person name="Enju A."/>
            <person name="Kamiya A."/>
            <person name="Narusaka M."/>
            <person name="Shin-i T."/>
            <person name="Nakagawa M."/>
            <person name="Sakamoto N."/>
            <person name="Oishi K."/>
            <person name="Kohara Y."/>
            <person name="Kobayashi M."/>
            <person name="Toyoda A."/>
            <person name="Sakaki Y."/>
            <person name="Sakurai T."/>
            <person name="Iida K."/>
            <person name="Akiyama K."/>
            <person name="Satou M."/>
            <person name="Toyoda T."/>
            <person name="Konagaya A."/>
            <person name="Carninci P."/>
            <person name="Kawai J."/>
            <person name="Hayashizaki Y."/>
            <person name="Shinozaki K."/>
        </authorList>
    </citation>
    <scope>NUCLEOTIDE SEQUENCE [LARGE SCALE MRNA] OF 59-298 (ISOFORMS 1/2)</scope>
    <source>
        <strain>cv. Columbia</strain>
    </source>
</reference>
<reference key="4">
    <citation type="journal article" date="2003" name="Science">
        <title>Empirical analysis of transcriptional activity in the Arabidopsis genome.</title>
        <authorList>
            <person name="Yamada K."/>
            <person name="Lim J."/>
            <person name="Dale J.M."/>
            <person name="Chen H."/>
            <person name="Shinn P."/>
            <person name="Palm C.J."/>
            <person name="Southwick A.M."/>
            <person name="Wu H.C."/>
            <person name="Kim C.J."/>
            <person name="Nguyen M."/>
            <person name="Pham P.K."/>
            <person name="Cheuk R.F."/>
            <person name="Karlin-Newmann G."/>
            <person name="Liu S.X."/>
            <person name="Lam B."/>
            <person name="Sakano H."/>
            <person name="Wu T."/>
            <person name="Yu G."/>
            <person name="Miranda M."/>
            <person name="Quach H.L."/>
            <person name="Tripp M."/>
            <person name="Chang C.H."/>
            <person name="Lee J.M."/>
            <person name="Toriumi M.J."/>
            <person name="Chan M.M."/>
            <person name="Tang C.C."/>
            <person name="Onodera C.S."/>
            <person name="Deng J.M."/>
            <person name="Akiyama K."/>
            <person name="Ansari Y."/>
            <person name="Arakawa T."/>
            <person name="Banh J."/>
            <person name="Banno F."/>
            <person name="Bowser L."/>
            <person name="Brooks S.Y."/>
            <person name="Carninci P."/>
            <person name="Chao Q."/>
            <person name="Choy N."/>
            <person name="Enju A."/>
            <person name="Goldsmith A.D."/>
            <person name="Gurjal M."/>
            <person name="Hansen N.F."/>
            <person name="Hayashizaki Y."/>
            <person name="Johnson-Hopson C."/>
            <person name="Hsuan V.W."/>
            <person name="Iida K."/>
            <person name="Karnes M."/>
            <person name="Khan S."/>
            <person name="Koesema E."/>
            <person name="Ishida J."/>
            <person name="Jiang P.X."/>
            <person name="Jones T."/>
            <person name="Kawai J."/>
            <person name="Kamiya A."/>
            <person name="Meyers C."/>
            <person name="Nakajima M."/>
            <person name="Narusaka M."/>
            <person name="Seki M."/>
            <person name="Sakurai T."/>
            <person name="Satou M."/>
            <person name="Tamse R."/>
            <person name="Vaysberg M."/>
            <person name="Wallender E.K."/>
            <person name="Wong C."/>
            <person name="Yamamura Y."/>
            <person name="Yuan S."/>
            <person name="Shinozaki K."/>
            <person name="Davis R.W."/>
            <person name="Theologis A."/>
            <person name="Ecker J.R."/>
        </authorList>
    </citation>
    <scope>NUCLEOTIDE SEQUENCE [LARGE SCALE MRNA] OF 150-298 (ISOFORMS 1/2)</scope>
    <source>
        <strain>cv. Columbia</strain>
    </source>
</reference>
<reference key="5">
    <citation type="journal article" date="2002" name="Plant Cell">
        <title>A unique short-chain dehydrogenase/reductase in Arabidopsis glucose signaling and abscisic acid biosynthesis and functions.</title>
        <authorList>
            <person name="Cheng W.-H."/>
            <person name="Endo A."/>
            <person name="Zhou L."/>
            <person name="Penney J."/>
            <person name="Chen H.-C."/>
            <person name="Arroyo A."/>
            <person name="Leon P."/>
            <person name="Nambara E."/>
            <person name="Asami T."/>
            <person name="Seo M."/>
            <person name="Koshiba T."/>
            <person name="Sheen J."/>
        </authorList>
    </citation>
    <scope>GENE FAMILY</scope>
    <scope>NOMENCLATURE</scope>
</reference>
<proteinExistence type="evidence at transcript level"/>
<protein>
    <recommendedName>
        <fullName>Short-chain dehydrogenase reductase 4</fullName>
        <shortName>AtSDR4</shortName>
        <ecNumber>1.1.1.-</ecNumber>
    </recommendedName>
</protein>
<dbReference type="EC" id="1.1.1.-"/>
<dbReference type="EMBL" id="AB026657">
    <property type="protein sequence ID" value="BAB01821.1"/>
    <property type="molecule type" value="Genomic_DNA"/>
</dbReference>
<dbReference type="EMBL" id="CP002686">
    <property type="protein sequence ID" value="AEE77556.1"/>
    <property type="molecule type" value="Genomic_DNA"/>
</dbReference>
<dbReference type="EMBL" id="CP002686">
    <property type="protein sequence ID" value="AEE77557.1"/>
    <property type="status" value="ALT_INIT"/>
    <property type="molecule type" value="Genomic_DNA"/>
</dbReference>
<dbReference type="EMBL" id="CP002686">
    <property type="protein sequence ID" value="ANM64100.1"/>
    <property type="molecule type" value="Genomic_DNA"/>
</dbReference>
<dbReference type="EMBL" id="AK227910">
    <property type="protein sequence ID" value="BAE99880.1"/>
    <property type="molecule type" value="mRNA"/>
</dbReference>
<dbReference type="EMBL" id="BT004580">
    <property type="protein sequence ID" value="AAO42826.1"/>
    <property type="molecule type" value="mRNA"/>
</dbReference>
<dbReference type="RefSeq" id="NP_001118737.1">
    <property type="nucleotide sequence ID" value="NM_001125265.2"/>
</dbReference>
<dbReference type="RefSeq" id="NP_001326150.1">
    <molecule id="F4J2Z7-2"/>
    <property type="nucleotide sequence ID" value="NM_001339015.1"/>
</dbReference>
<dbReference type="RefSeq" id="NP_189570.3">
    <molecule id="F4J2Z7-1"/>
    <property type="nucleotide sequence ID" value="NM_113849.3"/>
</dbReference>
<dbReference type="SMR" id="F4J2Z7"/>
<dbReference type="BioGRID" id="7909">
    <property type="interactions" value="3"/>
</dbReference>
<dbReference type="FunCoup" id="F4J2Z7">
    <property type="interactions" value="360"/>
</dbReference>
<dbReference type="STRING" id="3702.F4J2Z7"/>
<dbReference type="PaxDb" id="3702-AT3G29250.1"/>
<dbReference type="ProteomicsDB" id="234481">
    <molecule id="F4J2Z7-1"/>
</dbReference>
<dbReference type="EnsemblPlants" id="AT3G29250.1">
    <molecule id="F4J2Z7-1"/>
    <property type="protein sequence ID" value="AT3G29250.1"/>
    <property type="gene ID" value="AT3G29250"/>
</dbReference>
<dbReference type="EnsemblPlants" id="AT3G29250.3">
    <molecule id="F4J2Z7-2"/>
    <property type="protein sequence ID" value="AT3G29250.3"/>
    <property type="gene ID" value="AT3G29250"/>
</dbReference>
<dbReference type="GeneID" id="822580"/>
<dbReference type="Gramene" id="AT3G29250.1">
    <molecule id="F4J2Z7-1"/>
    <property type="protein sequence ID" value="AT3G29250.1"/>
    <property type="gene ID" value="AT3G29250"/>
</dbReference>
<dbReference type="Gramene" id="AT3G29250.3">
    <molecule id="F4J2Z7-2"/>
    <property type="protein sequence ID" value="AT3G29250.3"/>
    <property type="gene ID" value="AT3G29250"/>
</dbReference>
<dbReference type="KEGG" id="ath:AT3G29250"/>
<dbReference type="Araport" id="AT3G29250"/>
<dbReference type="TAIR" id="AT3G29250">
    <property type="gene designation" value="SDR4"/>
</dbReference>
<dbReference type="eggNOG" id="KOG0725">
    <property type="taxonomic scope" value="Eukaryota"/>
</dbReference>
<dbReference type="InParanoid" id="F4J2Z7"/>
<dbReference type="PRO" id="PR:F4J2Z7"/>
<dbReference type="Proteomes" id="UP000006548">
    <property type="component" value="Chromosome 3"/>
</dbReference>
<dbReference type="ExpressionAtlas" id="F4J2Z7">
    <property type="expression patterns" value="baseline and differential"/>
</dbReference>
<dbReference type="GO" id="GO:0005507">
    <property type="term" value="F:copper ion binding"/>
    <property type="evidence" value="ECO:0007005"/>
    <property type="project" value="TAIR"/>
</dbReference>
<dbReference type="GO" id="GO:0016491">
    <property type="term" value="F:oxidoreductase activity"/>
    <property type="evidence" value="ECO:0007669"/>
    <property type="project" value="UniProtKB-KW"/>
</dbReference>
<dbReference type="FunFam" id="3.40.50.720:FF:000084">
    <property type="entry name" value="Short-chain dehydrogenase reductase"/>
    <property type="match status" value="1"/>
</dbReference>
<dbReference type="Gene3D" id="3.40.50.720">
    <property type="entry name" value="NAD(P)-binding Rossmann-like Domain"/>
    <property type="match status" value="1"/>
</dbReference>
<dbReference type="InterPro" id="IPR036291">
    <property type="entry name" value="NAD(P)-bd_dom_sf"/>
</dbReference>
<dbReference type="InterPro" id="IPR002347">
    <property type="entry name" value="SDR_fam"/>
</dbReference>
<dbReference type="PANTHER" id="PTHR42820">
    <property type="entry name" value="SHORT-CHAIN DEHYDROGENASE REDUCTASE"/>
    <property type="match status" value="1"/>
</dbReference>
<dbReference type="PANTHER" id="PTHR42820:SF15">
    <property type="entry name" value="SHORT-CHAIN DEHYDROGENASE REDUCTASE 3A-RELATED"/>
    <property type="match status" value="1"/>
</dbReference>
<dbReference type="Pfam" id="PF13561">
    <property type="entry name" value="adh_short_C2"/>
    <property type="match status" value="1"/>
</dbReference>
<dbReference type="PRINTS" id="PR00081">
    <property type="entry name" value="GDHRDH"/>
</dbReference>
<dbReference type="PRINTS" id="PR00080">
    <property type="entry name" value="SDRFAMILY"/>
</dbReference>
<dbReference type="SUPFAM" id="SSF51735">
    <property type="entry name" value="NAD(P)-binding Rossmann-fold domains"/>
    <property type="match status" value="1"/>
</dbReference>
<evidence type="ECO:0000250" key="1"/>
<evidence type="ECO:0000305" key="2"/>
<keyword id="KW-0025">Alternative splicing</keyword>
<keyword id="KW-0560">Oxidoreductase</keyword>
<keyword id="KW-1185">Reference proteome</keyword>
<accession>F4J2Z7</accession>
<accession>F4J2Z8</accession>
<accession>Q0WSL8</accession>
<accession>Q84W02</accession>
<accession>Q9LS70</accession>
<gene>
    <name type="primary">SDR4</name>
    <name type="ordered locus">At3g29250</name>
    <name type="ORF">MXO21.10</name>
</gene>
<organism>
    <name type="scientific">Arabidopsis thaliana</name>
    <name type="common">Mouse-ear cress</name>
    <dbReference type="NCBI Taxonomy" id="3702"/>
    <lineage>
        <taxon>Eukaryota</taxon>
        <taxon>Viridiplantae</taxon>
        <taxon>Streptophyta</taxon>
        <taxon>Embryophyta</taxon>
        <taxon>Tracheophyta</taxon>
        <taxon>Spermatophyta</taxon>
        <taxon>Magnoliopsida</taxon>
        <taxon>eudicotyledons</taxon>
        <taxon>Gunneridae</taxon>
        <taxon>Pentapetalae</taxon>
        <taxon>rosids</taxon>
        <taxon>malvids</taxon>
        <taxon>Brassicales</taxon>
        <taxon>Brassicaceae</taxon>
        <taxon>Camelineae</taxon>
        <taxon>Arabidopsis</taxon>
    </lineage>
</organism>
<name>SDR4_ARATH</name>
<feature type="chain" id="PRO_0000419514" description="Short-chain dehydrogenase reductase 4">
    <location>
        <begin position="1"/>
        <end position="298"/>
    </location>
</feature>
<feature type="active site" description="Proton acceptor" evidence="1">
    <location>
        <position position="195"/>
    </location>
</feature>
<feature type="binding site" evidence="1">
    <location>
        <begin position="50"/>
        <end position="74"/>
    </location>
    <ligand>
        <name>NAD(+)</name>
        <dbReference type="ChEBI" id="CHEBI:57540"/>
    </ligand>
</feature>
<feature type="binding site" evidence="1">
    <location>
        <position position="182"/>
    </location>
    <ligand>
        <name>substrate</name>
    </ligand>
</feature>
<feature type="splice variant" id="VSP_044207" description="In isoform 2." evidence="2">
    <location>
        <begin position="42"/>
        <end position="43"/>
    </location>
</feature>